<accession>Q5HGP5</accession>
<organism>
    <name type="scientific">Staphylococcus aureus (strain COL)</name>
    <dbReference type="NCBI Taxonomy" id="93062"/>
    <lineage>
        <taxon>Bacteria</taxon>
        <taxon>Bacillati</taxon>
        <taxon>Bacillota</taxon>
        <taxon>Bacilli</taxon>
        <taxon>Bacillales</taxon>
        <taxon>Staphylococcaceae</taxon>
        <taxon>Staphylococcus</taxon>
    </lineage>
</organism>
<dbReference type="EMBL" id="CP000046">
    <property type="protein sequence ID" value="AAW38036.1"/>
    <property type="molecule type" value="Genomic_DNA"/>
</dbReference>
<dbReference type="RefSeq" id="WP_000888997.1">
    <property type="nucleotide sequence ID" value="NZ_JBGOFO010000002.1"/>
</dbReference>
<dbReference type="SMR" id="Q5HGP5"/>
<dbReference type="GeneID" id="98345502"/>
<dbReference type="KEGG" id="sac:SACOL1199"/>
<dbReference type="HOGENOM" id="CLU_024865_0_1_9"/>
<dbReference type="Proteomes" id="UP000000530">
    <property type="component" value="Chromosome"/>
</dbReference>
<dbReference type="GO" id="GO:0032153">
    <property type="term" value="C:cell division site"/>
    <property type="evidence" value="ECO:0007669"/>
    <property type="project" value="UniProtKB-UniRule"/>
</dbReference>
<dbReference type="GO" id="GO:0005737">
    <property type="term" value="C:cytoplasm"/>
    <property type="evidence" value="ECO:0007669"/>
    <property type="project" value="UniProtKB-SubCell"/>
</dbReference>
<dbReference type="GO" id="GO:0005525">
    <property type="term" value="F:GTP binding"/>
    <property type="evidence" value="ECO:0007669"/>
    <property type="project" value="UniProtKB-UniRule"/>
</dbReference>
<dbReference type="GO" id="GO:0003924">
    <property type="term" value="F:GTPase activity"/>
    <property type="evidence" value="ECO:0007669"/>
    <property type="project" value="UniProtKB-UniRule"/>
</dbReference>
<dbReference type="GO" id="GO:0000917">
    <property type="term" value="P:division septum assembly"/>
    <property type="evidence" value="ECO:0007669"/>
    <property type="project" value="UniProtKB-KW"/>
</dbReference>
<dbReference type="GO" id="GO:0043093">
    <property type="term" value="P:FtsZ-dependent cytokinesis"/>
    <property type="evidence" value="ECO:0007669"/>
    <property type="project" value="UniProtKB-UniRule"/>
</dbReference>
<dbReference type="GO" id="GO:0051258">
    <property type="term" value="P:protein polymerization"/>
    <property type="evidence" value="ECO:0007669"/>
    <property type="project" value="UniProtKB-UniRule"/>
</dbReference>
<dbReference type="CDD" id="cd02201">
    <property type="entry name" value="FtsZ_type1"/>
    <property type="match status" value="1"/>
</dbReference>
<dbReference type="FunFam" id="3.30.1330.20:FF:000005">
    <property type="entry name" value="Cell division protein FtsZ"/>
    <property type="match status" value="1"/>
</dbReference>
<dbReference type="FunFam" id="3.40.50.1440:FF:000023">
    <property type="entry name" value="Cell division protein FtsZ"/>
    <property type="match status" value="1"/>
</dbReference>
<dbReference type="Gene3D" id="3.30.1330.20">
    <property type="entry name" value="Tubulin/FtsZ, C-terminal domain"/>
    <property type="match status" value="1"/>
</dbReference>
<dbReference type="Gene3D" id="3.40.50.1440">
    <property type="entry name" value="Tubulin/FtsZ, GTPase domain"/>
    <property type="match status" value="1"/>
</dbReference>
<dbReference type="HAMAP" id="MF_00909">
    <property type="entry name" value="FtsZ"/>
    <property type="match status" value="1"/>
</dbReference>
<dbReference type="InterPro" id="IPR000158">
    <property type="entry name" value="Cell_div_FtsZ"/>
</dbReference>
<dbReference type="InterPro" id="IPR020805">
    <property type="entry name" value="Cell_div_FtsZ_CS"/>
</dbReference>
<dbReference type="InterPro" id="IPR045061">
    <property type="entry name" value="FtsZ/CetZ"/>
</dbReference>
<dbReference type="InterPro" id="IPR024757">
    <property type="entry name" value="FtsZ_C"/>
</dbReference>
<dbReference type="InterPro" id="IPR008280">
    <property type="entry name" value="Tub_FtsZ_C"/>
</dbReference>
<dbReference type="InterPro" id="IPR037103">
    <property type="entry name" value="Tubulin/FtsZ-like_C"/>
</dbReference>
<dbReference type="InterPro" id="IPR018316">
    <property type="entry name" value="Tubulin/FtsZ_2-layer-sand-dom"/>
</dbReference>
<dbReference type="InterPro" id="IPR036525">
    <property type="entry name" value="Tubulin/FtsZ_GTPase_sf"/>
</dbReference>
<dbReference type="InterPro" id="IPR003008">
    <property type="entry name" value="Tubulin_FtsZ_GTPase"/>
</dbReference>
<dbReference type="NCBIfam" id="TIGR00065">
    <property type="entry name" value="ftsZ"/>
    <property type="match status" value="1"/>
</dbReference>
<dbReference type="PANTHER" id="PTHR30314">
    <property type="entry name" value="CELL DIVISION PROTEIN FTSZ-RELATED"/>
    <property type="match status" value="1"/>
</dbReference>
<dbReference type="PANTHER" id="PTHR30314:SF3">
    <property type="entry name" value="MITOCHONDRIAL DIVISION PROTEIN FSZA"/>
    <property type="match status" value="1"/>
</dbReference>
<dbReference type="Pfam" id="PF12327">
    <property type="entry name" value="FtsZ_C"/>
    <property type="match status" value="1"/>
</dbReference>
<dbReference type="Pfam" id="PF00091">
    <property type="entry name" value="Tubulin"/>
    <property type="match status" value="1"/>
</dbReference>
<dbReference type="PRINTS" id="PR00423">
    <property type="entry name" value="CELLDVISFTSZ"/>
</dbReference>
<dbReference type="SMART" id="SM00864">
    <property type="entry name" value="Tubulin"/>
    <property type="match status" value="1"/>
</dbReference>
<dbReference type="SMART" id="SM00865">
    <property type="entry name" value="Tubulin_C"/>
    <property type="match status" value="1"/>
</dbReference>
<dbReference type="SUPFAM" id="SSF55307">
    <property type="entry name" value="Tubulin C-terminal domain-like"/>
    <property type="match status" value="1"/>
</dbReference>
<dbReference type="SUPFAM" id="SSF52490">
    <property type="entry name" value="Tubulin nucleotide-binding domain-like"/>
    <property type="match status" value="1"/>
</dbReference>
<dbReference type="PROSITE" id="PS01134">
    <property type="entry name" value="FTSZ_1"/>
    <property type="match status" value="1"/>
</dbReference>
<dbReference type="PROSITE" id="PS01135">
    <property type="entry name" value="FTSZ_2"/>
    <property type="match status" value="1"/>
</dbReference>
<evidence type="ECO:0000255" key="1">
    <source>
        <dbReference type="HAMAP-Rule" id="MF_00909"/>
    </source>
</evidence>
<evidence type="ECO:0000256" key="2">
    <source>
        <dbReference type="SAM" id="MobiDB-lite"/>
    </source>
</evidence>
<gene>
    <name evidence="1" type="primary">ftsZ</name>
    <name type="ordered locus">SACOL1199</name>
</gene>
<sequence>MLEFEQGFNHLATLKVIGVGGGGNNAVNRMIDHGMNNVEFIAINTDGQALNLSKAESKIQIGEKLTRGLGAGANPEIGKKAAEESREQIEDAIQGADMVFVTSGMGGGTGTGAAPVVAKIAKEMGALTVGVVTRPFSFEGRKRQTQAAAGVEAMKAAVDTLIVIPNDRLLDIVDKSTPMMEAFKEADNVLRQGVQGISDLIAVSGEVNLDFADVKTIMSNQGSALMGIGVSSGENRAVEAAKKAISSPLLETSIVGAQGVLMNITGGESLSLFEAQEAADIVQDAADEDVNMIFGTVINPELQDEIVVTVIATGFDDKPTSHGRKSGSTGFGTSVNTSSNATSKDESFTSNSSNAQATDSVSERTHTTKEDDIPSFIRNREERRSRRTRR</sequence>
<keyword id="KW-0131">Cell cycle</keyword>
<keyword id="KW-0132">Cell division</keyword>
<keyword id="KW-0963">Cytoplasm</keyword>
<keyword id="KW-0342">GTP-binding</keyword>
<keyword id="KW-0547">Nucleotide-binding</keyword>
<keyword id="KW-0717">Septation</keyword>
<name>FTSZ_STAAC</name>
<comment type="function">
    <text evidence="1">Essential cell division protein that forms a contractile ring structure (Z ring) at the future cell division site. The regulation of the ring assembly controls the timing and the location of cell division. One of the functions of the FtsZ ring is to recruit other cell division proteins to the septum to produce a new cell wall between the dividing cells. Binds GTP and shows GTPase activity.</text>
</comment>
<comment type="subunit">
    <text evidence="1">Homodimer. Polymerizes to form a dynamic ring structure in a strictly GTP-dependent manner. Interacts directly with several other division proteins.</text>
</comment>
<comment type="subcellular location">
    <subcellularLocation>
        <location evidence="1">Cytoplasm</location>
    </subcellularLocation>
    <text evidence="1">Assembles at midcell at the inner surface of the cytoplasmic membrane.</text>
</comment>
<comment type="similarity">
    <text evidence="1">Belongs to the FtsZ family.</text>
</comment>
<protein>
    <recommendedName>
        <fullName evidence="1">Cell division protein FtsZ</fullName>
    </recommendedName>
</protein>
<proteinExistence type="inferred from homology"/>
<reference key="1">
    <citation type="journal article" date="2005" name="J. Bacteriol.">
        <title>Insights on evolution of virulence and resistance from the complete genome analysis of an early methicillin-resistant Staphylococcus aureus strain and a biofilm-producing methicillin-resistant Staphylococcus epidermidis strain.</title>
        <authorList>
            <person name="Gill S.R."/>
            <person name="Fouts D.E."/>
            <person name="Archer G.L."/>
            <person name="Mongodin E.F."/>
            <person name="DeBoy R.T."/>
            <person name="Ravel J."/>
            <person name="Paulsen I.T."/>
            <person name="Kolonay J.F."/>
            <person name="Brinkac L.M."/>
            <person name="Beanan M.J."/>
            <person name="Dodson R.J."/>
            <person name="Daugherty S.C."/>
            <person name="Madupu R."/>
            <person name="Angiuoli S.V."/>
            <person name="Durkin A.S."/>
            <person name="Haft D.H."/>
            <person name="Vamathevan J.J."/>
            <person name="Khouri H."/>
            <person name="Utterback T.R."/>
            <person name="Lee C."/>
            <person name="Dimitrov G."/>
            <person name="Jiang L."/>
            <person name="Qin H."/>
            <person name="Weidman J."/>
            <person name="Tran K."/>
            <person name="Kang K.H."/>
            <person name="Hance I.R."/>
            <person name="Nelson K.E."/>
            <person name="Fraser C.M."/>
        </authorList>
    </citation>
    <scope>NUCLEOTIDE SEQUENCE [LARGE SCALE GENOMIC DNA]</scope>
    <source>
        <strain>COL</strain>
    </source>
</reference>
<feature type="chain" id="PRO_0000114379" description="Cell division protein FtsZ">
    <location>
        <begin position="1"/>
        <end position="390"/>
    </location>
</feature>
<feature type="region of interest" description="Disordered" evidence="2">
    <location>
        <begin position="315"/>
        <end position="390"/>
    </location>
</feature>
<feature type="compositionally biased region" description="Polar residues" evidence="2">
    <location>
        <begin position="326"/>
        <end position="360"/>
    </location>
</feature>
<feature type="compositionally biased region" description="Basic and acidic residues" evidence="2">
    <location>
        <begin position="361"/>
        <end position="384"/>
    </location>
</feature>
<feature type="binding site" evidence="1">
    <location>
        <begin position="21"/>
        <end position="25"/>
    </location>
    <ligand>
        <name>GTP</name>
        <dbReference type="ChEBI" id="CHEBI:37565"/>
    </ligand>
</feature>
<feature type="binding site" evidence="1">
    <location>
        <begin position="108"/>
        <end position="110"/>
    </location>
    <ligand>
        <name>GTP</name>
        <dbReference type="ChEBI" id="CHEBI:37565"/>
    </ligand>
</feature>
<feature type="binding site" evidence="1">
    <location>
        <position position="139"/>
    </location>
    <ligand>
        <name>GTP</name>
        <dbReference type="ChEBI" id="CHEBI:37565"/>
    </ligand>
</feature>
<feature type="binding site" evidence="1">
    <location>
        <position position="143"/>
    </location>
    <ligand>
        <name>GTP</name>
        <dbReference type="ChEBI" id="CHEBI:37565"/>
    </ligand>
</feature>
<feature type="binding site" evidence="1">
    <location>
        <position position="187"/>
    </location>
    <ligand>
        <name>GTP</name>
        <dbReference type="ChEBI" id="CHEBI:37565"/>
    </ligand>
</feature>